<name>E311_ADE07</name>
<evidence type="ECO:0000250" key="1"/>
<evidence type="ECO:0000255" key="2"/>
<sequence>MILFQSNTTNTINVQTTLNHDMENHTTSYAYINIQPKYAMHLKITILIVIGILILSVILYFLFSYD</sequence>
<reference key="1">
    <citation type="journal article" date="1988" name="Virology">
        <title>Characterization of the early region 3 and fiber genes of Ad7.</title>
        <authorList>
            <person name="Hong J.S."/>
            <person name="Mullis K.G."/>
            <person name="Engler J.A."/>
        </authorList>
    </citation>
    <scope>NUCLEOTIDE SEQUENCE [GENOMIC DNA]</scope>
    <source>
        <strain>Gomen</strain>
    </source>
</reference>
<accession>P17592</accession>
<comment type="subcellular location">
    <subcellularLocation>
        <location evidence="1">Host nucleus membrane</location>
        <topology evidence="1">Single-pass membrane protein</topology>
    </subcellularLocation>
</comment>
<protein>
    <recommendedName>
        <fullName>Early E3 7.7 kDa protein</fullName>
    </recommendedName>
</protein>
<keyword id="KW-0244">Early protein</keyword>
<keyword id="KW-0325">Glycoprotein</keyword>
<keyword id="KW-1043">Host membrane</keyword>
<keyword id="KW-1048">Host nucleus</keyword>
<keyword id="KW-0472">Membrane</keyword>
<keyword id="KW-0812">Transmembrane</keyword>
<keyword id="KW-1133">Transmembrane helix</keyword>
<organism>
    <name type="scientific">Human adenovirus B serotype 7</name>
    <name type="common">HAdV-7</name>
    <name type="synonym">Human adenovirus 7</name>
    <dbReference type="NCBI Taxonomy" id="10519"/>
    <lineage>
        <taxon>Viruses</taxon>
        <taxon>Varidnaviria</taxon>
        <taxon>Bamfordvirae</taxon>
        <taxon>Preplasmiviricota</taxon>
        <taxon>Tectiliviricetes</taxon>
        <taxon>Rowavirales</taxon>
        <taxon>Adenoviridae</taxon>
        <taxon>Mastadenovirus</taxon>
        <taxon>Human mastadenovirus B</taxon>
    </lineage>
</organism>
<feature type="chain" id="PRO_0000221740" description="Early E3 7.7 kDa protein">
    <location>
        <begin position="1"/>
        <end position="66"/>
    </location>
</feature>
<feature type="transmembrane region" description="Helical" evidence="2">
    <location>
        <begin position="44"/>
        <end position="64"/>
    </location>
</feature>
<feature type="glycosylation site" description="N-linked (GlcNAc...) asparagine; by host" evidence="2">
    <location>
        <position position="7"/>
    </location>
</feature>
<feature type="glycosylation site" description="N-linked (GlcNAc...) asparagine; by host" evidence="2">
    <location>
        <position position="24"/>
    </location>
</feature>
<dbReference type="EMBL" id="M23696">
    <property type="protein sequence ID" value="AAA53250.1"/>
    <property type="molecule type" value="Genomic_DNA"/>
</dbReference>
<dbReference type="PIR" id="B31830">
    <property type="entry name" value="ERAD79"/>
</dbReference>
<dbReference type="SMR" id="P17592"/>
<dbReference type="GO" id="GO:0044200">
    <property type="term" value="C:host cell nuclear membrane"/>
    <property type="evidence" value="ECO:0007669"/>
    <property type="project" value="UniProtKB-SubCell"/>
</dbReference>
<dbReference type="GO" id="GO:0016020">
    <property type="term" value="C:membrane"/>
    <property type="evidence" value="ECO:0007669"/>
    <property type="project" value="UniProtKB-KW"/>
</dbReference>
<organismHost>
    <name type="scientific">Homo sapiens</name>
    <name type="common">Human</name>
    <dbReference type="NCBI Taxonomy" id="9606"/>
</organismHost>
<proteinExistence type="inferred from homology"/>